<keyword id="KW-0963">Cytoplasm</keyword>
<keyword id="KW-0369">Histidine metabolism</keyword>
<keyword id="KW-0456">Lyase</keyword>
<keyword id="KW-1185">Reference proteome</keyword>
<proteinExistence type="inferred from homology"/>
<gene>
    <name evidence="1" type="primary">hutH</name>
    <name type="ordered locus">SO_0098</name>
</gene>
<feature type="chain" id="PRO_0000161027" description="Histidine ammonia-lyase">
    <location>
        <begin position="1"/>
        <end position="513"/>
    </location>
</feature>
<feature type="modified residue" description="2,3-didehydroalanine (Ser)" evidence="1">
    <location>
        <position position="147"/>
    </location>
</feature>
<feature type="cross-link" description="5-imidazolinone (Ala-Gly)" evidence="1">
    <location>
        <begin position="146"/>
        <end position="148"/>
    </location>
</feature>
<name>HUTH_SHEON</name>
<reference key="1">
    <citation type="journal article" date="2002" name="Nat. Biotechnol.">
        <title>Genome sequence of the dissimilatory metal ion-reducing bacterium Shewanella oneidensis.</title>
        <authorList>
            <person name="Heidelberg J.F."/>
            <person name="Paulsen I.T."/>
            <person name="Nelson K.E."/>
            <person name="Gaidos E.J."/>
            <person name="Nelson W.C."/>
            <person name="Read T.D."/>
            <person name="Eisen J.A."/>
            <person name="Seshadri R."/>
            <person name="Ward N.L."/>
            <person name="Methe B.A."/>
            <person name="Clayton R.A."/>
            <person name="Meyer T."/>
            <person name="Tsapin A."/>
            <person name="Scott J."/>
            <person name="Beanan M.J."/>
            <person name="Brinkac L.M."/>
            <person name="Daugherty S.C."/>
            <person name="DeBoy R.T."/>
            <person name="Dodson R.J."/>
            <person name="Durkin A.S."/>
            <person name="Haft D.H."/>
            <person name="Kolonay J.F."/>
            <person name="Madupu R."/>
            <person name="Peterson J.D."/>
            <person name="Umayam L.A."/>
            <person name="White O."/>
            <person name="Wolf A.M."/>
            <person name="Vamathevan J.J."/>
            <person name="Weidman J.F."/>
            <person name="Impraim M."/>
            <person name="Lee K."/>
            <person name="Berry K.J."/>
            <person name="Lee C."/>
            <person name="Mueller J."/>
            <person name="Khouri H.M."/>
            <person name="Gill J."/>
            <person name="Utterback T.R."/>
            <person name="McDonald L.A."/>
            <person name="Feldblyum T.V."/>
            <person name="Smith H.O."/>
            <person name="Venter J.C."/>
            <person name="Nealson K.H."/>
            <person name="Fraser C.M."/>
        </authorList>
    </citation>
    <scope>NUCLEOTIDE SEQUENCE [LARGE SCALE GENOMIC DNA]</scope>
    <source>
        <strain>ATCC 700550 / JCM 31522 / CIP 106686 / LMG 19005 / NCIMB 14063 / MR-1</strain>
    </source>
</reference>
<evidence type="ECO:0000255" key="1">
    <source>
        <dbReference type="HAMAP-Rule" id="MF_00229"/>
    </source>
</evidence>
<dbReference type="EC" id="4.3.1.3" evidence="1"/>
<dbReference type="EMBL" id="AE014299">
    <property type="protein sequence ID" value="AAN53185.1"/>
    <property type="molecule type" value="Genomic_DNA"/>
</dbReference>
<dbReference type="RefSeq" id="NP_715740.1">
    <property type="nucleotide sequence ID" value="NC_004347.2"/>
</dbReference>
<dbReference type="RefSeq" id="WP_011070508.1">
    <property type="nucleotide sequence ID" value="NC_004347.2"/>
</dbReference>
<dbReference type="SMR" id="Q8EKJ4"/>
<dbReference type="STRING" id="211586.SO_0098"/>
<dbReference type="PaxDb" id="211586-SO_0098"/>
<dbReference type="KEGG" id="son:SO_0098"/>
<dbReference type="PATRIC" id="fig|211586.12.peg.98"/>
<dbReference type="eggNOG" id="COG2986">
    <property type="taxonomic scope" value="Bacteria"/>
</dbReference>
<dbReference type="HOGENOM" id="CLU_014801_4_0_6"/>
<dbReference type="OrthoDB" id="9806955at2"/>
<dbReference type="PhylomeDB" id="Q8EKJ4"/>
<dbReference type="BioCyc" id="SONE211586:G1GMP-96-MONOMER"/>
<dbReference type="UniPathway" id="UPA00379">
    <property type="reaction ID" value="UER00549"/>
</dbReference>
<dbReference type="Proteomes" id="UP000008186">
    <property type="component" value="Chromosome"/>
</dbReference>
<dbReference type="GO" id="GO:0005737">
    <property type="term" value="C:cytoplasm"/>
    <property type="evidence" value="ECO:0007669"/>
    <property type="project" value="UniProtKB-SubCell"/>
</dbReference>
<dbReference type="GO" id="GO:0004397">
    <property type="term" value="F:histidine ammonia-lyase activity"/>
    <property type="evidence" value="ECO:0000318"/>
    <property type="project" value="GO_Central"/>
</dbReference>
<dbReference type="GO" id="GO:0006548">
    <property type="term" value="P:L-histidine catabolic process"/>
    <property type="evidence" value="ECO:0000318"/>
    <property type="project" value="GO_Central"/>
</dbReference>
<dbReference type="GO" id="GO:0019556">
    <property type="term" value="P:L-histidine catabolic process to glutamate and formamide"/>
    <property type="evidence" value="ECO:0007669"/>
    <property type="project" value="UniProtKB-UniPathway"/>
</dbReference>
<dbReference type="GO" id="GO:0019557">
    <property type="term" value="P:L-histidine catabolic process to glutamate and formate"/>
    <property type="evidence" value="ECO:0007669"/>
    <property type="project" value="UniProtKB-UniPathway"/>
</dbReference>
<dbReference type="CDD" id="cd00332">
    <property type="entry name" value="PAL-HAL"/>
    <property type="match status" value="1"/>
</dbReference>
<dbReference type="FunFam" id="1.10.275.10:FF:000005">
    <property type="entry name" value="Histidine ammonia-lyase"/>
    <property type="match status" value="1"/>
</dbReference>
<dbReference type="FunFam" id="1.20.200.10:FF:000003">
    <property type="entry name" value="Histidine ammonia-lyase"/>
    <property type="match status" value="1"/>
</dbReference>
<dbReference type="Gene3D" id="1.20.200.10">
    <property type="entry name" value="Fumarase/aspartase (Central domain)"/>
    <property type="match status" value="1"/>
</dbReference>
<dbReference type="Gene3D" id="1.10.275.10">
    <property type="entry name" value="Fumarase/aspartase (N-terminal domain)"/>
    <property type="match status" value="1"/>
</dbReference>
<dbReference type="HAMAP" id="MF_00229">
    <property type="entry name" value="His_ammonia_lyase"/>
    <property type="match status" value="1"/>
</dbReference>
<dbReference type="InterPro" id="IPR001106">
    <property type="entry name" value="Aromatic_Lyase"/>
</dbReference>
<dbReference type="InterPro" id="IPR024083">
    <property type="entry name" value="Fumarase/histidase_N"/>
</dbReference>
<dbReference type="InterPro" id="IPR005921">
    <property type="entry name" value="HutH"/>
</dbReference>
<dbReference type="InterPro" id="IPR008948">
    <property type="entry name" value="L-Aspartase-like"/>
</dbReference>
<dbReference type="InterPro" id="IPR022313">
    <property type="entry name" value="Phe/His_NH3-lyase_AS"/>
</dbReference>
<dbReference type="NCBIfam" id="TIGR01225">
    <property type="entry name" value="hutH"/>
    <property type="match status" value="1"/>
</dbReference>
<dbReference type="NCBIfam" id="NF006871">
    <property type="entry name" value="PRK09367.1"/>
    <property type="match status" value="1"/>
</dbReference>
<dbReference type="PANTHER" id="PTHR10362">
    <property type="entry name" value="HISTIDINE AMMONIA-LYASE"/>
    <property type="match status" value="1"/>
</dbReference>
<dbReference type="Pfam" id="PF00221">
    <property type="entry name" value="Lyase_aromatic"/>
    <property type="match status" value="1"/>
</dbReference>
<dbReference type="SUPFAM" id="SSF48557">
    <property type="entry name" value="L-aspartase-like"/>
    <property type="match status" value="1"/>
</dbReference>
<dbReference type="PROSITE" id="PS00488">
    <property type="entry name" value="PAL_HISTIDASE"/>
    <property type="match status" value="1"/>
</dbReference>
<sequence>MKSVNHLVLTPGSLSLAQLREISRHKLTLELAPEAINDINISAQIVQKVLDEGRTVYGINTGFGLLANTKIAPEDLQLLQRSIVLSHAAGTGQYMQDATVRLMMVLKINSLSRGFSGIRLEVINFLISLVNAEVYPCVPEKGSVGASGDLAPLAHMCLPLLGEGEMSYQGQIISAAEGLEIAGLKPIDLAAKEGLALLNGTQASTALALEGLFHAEDLFAASSVIGAMSVEAAMGSRSPFDPRIHAARGQKGQIDSAMVFRYLLGEESEISLSHANCEKVQDPYSLRCQPQVLGACLTQIRQAAEVLATEANGVTDNPLVFQDTGDIISGGNFHAEPVAMAADNLAIAIAELGAIAERRIALLIDSSLSKLPPFLVKNGGVNSGFMIAQVTAAALASENKTYAHPASVDSLPTSANQEDHVSMATFAARRLRDMSENTRGVLAIELLAAAQGLDFRAPLTPSKAVAQAKAELREVVAYYDKDRYFAPDIEAATDLLYTASFNAYLPLGVLPSL</sequence>
<organism>
    <name type="scientific">Shewanella oneidensis (strain ATCC 700550 / JCM 31522 / CIP 106686 / LMG 19005 / NCIMB 14063 / MR-1)</name>
    <dbReference type="NCBI Taxonomy" id="211586"/>
    <lineage>
        <taxon>Bacteria</taxon>
        <taxon>Pseudomonadati</taxon>
        <taxon>Pseudomonadota</taxon>
        <taxon>Gammaproteobacteria</taxon>
        <taxon>Alteromonadales</taxon>
        <taxon>Shewanellaceae</taxon>
        <taxon>Shewanella</taxon>
    </lineage>
</organism>
<protein>
    <recommendedName>
        <fullName evidence="1">Histidine ammonia-lyase</fullName>
        <shortName evidence="1">Histidase</shortName>
        <ecNumber evidence="1">4.3.1.3</ecNumber>
    </recommendedName>
</protein>
<comment type="catalytic activity">
    <reaction evidence="1">
        <text>L-histidine = trans-urocanate + NH4(+)</text>
        <dbReference type="Rhea" id="RHEA:21232"/>
        <dbReference type="ChEBI" id="CHEBI:17771"/>
        <dbReference type="ChEBI" id="CHEBI:28938"/>
        <dbReference type="ChEBI" id="CHEBI:57595"/>
        <dbReference type="EC" id="4.3.1.3"/>
    </reaction>
</comment>
<comment type="pathway">
    <text evidence="1">Amino-acid degradation; L-histidine degradation into L-glutamate; N-formimidoyl-L-glutamate from L-histidine: step 1/3.</text>
</comment>
<comment type="subcellular location">
    <subcellularLocation>
        <location evidence="1">Cytoplasm</location>
    </subcellularLocation>
</comment>
<comment type="PTM">
    <text evidence="1">Contains an active site 4-methylidene-imidazol-5-one (MIO), which is formed autocatalytically by cyclization and dehydration of residues Ala-Ser-Gly.</text>
</comment>
<comment type="similarity">
    <text evidence="1">Belongs to the PAL/histidase family.</text>
</comment>
<accession>Q8EKJ4</accession>